<gene>
    <name evidence="1" type="primary">yciB</name>
    <name type="ordered locus">APP7_1027</name>
</gene>
<name>YCIB_ACTP7</name>
<feature type="chain" id="PRO_1000098867" description="Inner membrane-spanning protein YciB">
    <location>
        <begin position="1"/>
        <end position="183"/>
    </location>
</feature>
<feature type="transmembrane region" description="Helical" evidence="1">
    <location>
        <begin position="19"/>
        <end position="39"/>
    </location>
</feature>
<feature type="transmembrane region" description="Helical" evidence="1">
    <location>
        <begin position="53"/>
        <end position="73"/>
    </location>
</feature>
<feature type="transmembrane region" description="Helical" evidence="1">
    <location>
        <begin position="76"/>
        <end position="96"/>
    </location>
</feature>
<feature type="transmembrane region" description="Helical" evidence="1">
    <location>
        <begin position="121"/>
        <end position="141"/>
    </location>
</feature>
<feature type="transmembrane region" description="Helical" evidence="1">
    <location>
        <begin position="151"/>
        <end position="171"/>
    </location>
</feature>
<evidence type="ECO:0000255" key="1">
    <source>
        <dbReference type="HAMAP-Rule" id="MF_00189"/>
    </source>
</evidence>
<protein>
    <recommendedName>
        <fullName evidence="1">Inner membrane-spanning protein YciB</fullName>
    </recommendedName>
</protein>
<keyword id="KW-0997">Cell inner membrane</keyword>
<keyword id="KW-1003">Cell membrane</keyword>
<keyword id="KW-0472">Membrane</keyword>
<keyword id="KW-0812">Transmembrane</keyword>
<keyword id="KW-1133">Transmembrane helix</keyword>
<dbReference type="EMBL" id="CP001091">
    <property type="protein sequence ID" value="ACE61679.1"/>
    <property type="molecule type" value="Genomic_DNA"/>
</dbReference>
<dbReference type="RefSeq" id="WP_005597680.1">
    <property type="nucleotide sequence ID" value="NC_010939.1"/>
</dbReference>
<dbReference type="KEGG" id="apa:APP7_1027"/>
<dbReference type="HOGENOM" id="CLU_089554_2_0_6"/>
<dbReference type="Proteomes" id="UP000001226">
    <property type="component" value="Chromosome"/>
</dbReference>
<dbReference type="GO" id="GO:0005886">
    <property type="term" value="C:plasma membrane"/>
    <property type="evidence" value="ECO:0007669"/>
    <property type="project" value="UniProtKB-SubCell"/>
</dbReference>
<dbReference type="HAMAP" id="MF_00189">
    <property type="entry name" value="YciB"/>
    <property type="match status" value="1"/>
</dbReference>
<dbReference type="InterPro" id="IPR006008">
    <property type="entry name" value="YciB"/>
</dbReference>
<dbReference type="NCBIfam" id="TIGR00997">
    <property type="entry name" value="ispZ"/>
    <property type="match status" value="1"/>
</dbReference>
<dbReference type="NCBIfam" id="NF001324">
    <property type="entry name" value="PRK00259.1-2"/>
    <property type="match status" value="1"/>
</dbReference>
<dbReference type="PANTHER" id="PTHR36917:SF1">
    <property type="entry name" value="INNER MEMBRANE-SPANNING PROTEIN YCIB"/>
    <property type="match status" value="1"/>
</dbReference>
<dbReference type="PANTHER" id="PTHR36917">
    <property type="entry name" value="INTRACELLULAR SEPTATION PROTEIN A-RELATED"/>
    <property type="match status" value="1"/>
</dbReference>
<dbReference type="Pfam" id="PF04279">
    <property type="entry name" value="IspA"/>
    <property type="match status" value="1"/>
</dbReference>
<comment type="function">
    <text evidence="1">Plays a role in cell envelope biogenesis, maintenance of cell envelope integrity and membrane homeostasis.</text>
</comment>
<comment type="subcellular location">
    <subcellularLocation>
        <location evidence="1">Cell inner membrane</location>
        <topology evidence="1">Multi-pass membrane protein</topology>
    </subcellularLocation>
</comment>
<comment type="similarity">
    <text evidence="1">Belongs to the YciB family.</text>
</comment>
<sequence length="183" mass="20992">MKQLLEFIPLILFFTVYKLYGVQQAAITLVIATVIQLIVLKVLYKKIEKSQWIMGIFVVFFGILTAYFNDLNFLKWKVTIINGLFAAVLLVSQFVFKKPIIQMLLGKELKLPTNVWNRLNLGWAGFFIICMLLNIVISYYFSDDVWATFKTFGFTGLSLIAAIATGVYLYPHLKNVENTNEQA</sequence>
<accession>B3GXW4</accession>
<proteinExistence type="inferred from homology"/>
<reference key="1">
    <citation type="submission" date="2008-06" db="EMBL/GenBank/DDBJ databases">
        <title>Genome and proteome analysis of A. pleuropneumoniae serotype 7.</title>
        <authorList>
            <person name="Linke B."/>
            <person name="Buettner F."/>
            <person name="Martinez-Arias R."/>
            <person name="Goesmann A."/>
            <person name="Baltes N."/>
            <person name="Tegetmeyer H."/>
            <person name="Singh M."/>
            <person name="Gerlach G.F."/>
        </authorList>
    </citation>
    <scope>NUCLEOTIDE SEQUENCE [LARGE SCALE GENOMIC DNA]</scope>
    <source>
        <strain>AP76</strain>
    </source>
</reference>
<organism>
    <name type="scientific">Actinobacillus pleuropneumoniae serotype 7 (strain AP76)</name>
    <dbReference type="NCBI Taxonomy" id="537457"/>
    <lineage>
        <taxon>Bacteria</taxon>
        <taxon>Pseudomonadati</taxon>
        <taxon>Pseudomonadota</taxon>
        <taxon>Gammaproteobacteria</taxon>
        <taxon>Pasteurellales</taxon>
        <taxon>Pasteurellaceae</taxon>
        <taxon>Actinobacillus</taxon>
    </lineage>
</organism>